<comment type="function">
    <text evidence="1">Required for accurate and efficient protein synthesis under certain stress conditions. May act as a fidelity factor of the translation reaction, by catalyzing a one-codon backward translocation of tRNAs on improperly translocated ribosomes. Back-translocation proceeds from a post-translocation (POST) complex to a pre-translocation (PRE) complex, thus giving elongation factor G a second chance to translocate the tRNAs correctly. Binds to ribosomes in a GTP-dependent manner.</text>
</comment>
<comment type="catalytic activity">
    <reaction evidence="1">
        <text>GTP + H2O = GDP + phosphate + H(+)</text>
        <dbReference type="Rhea" id="RHEA:19669"/>
        <dbReference type="ChEBI" id="CHEBI:15377"/>
        <dbReference type="ChEBI" id="CHEBI:15378"/>
        <dbReference type="ChEBI" id="CHEBI:37565"/>
        <dbReference type="ChEBI" id="CHEBI:43474"/>
        <dbReference type="ChEBI" id="CHEBI:58189"/>
        <dbReference type="EC" id="3.6.5.n1"/>
    </reaction>
</comment>
<comment type="subcellular location">
    <subcellularLocation>
        <location evidence="1">Cell membrane</location>
        <topology evidence="1">Peripheral membrane protein</topology>
        <orientation evidence="1">Cytoplasmic side</orientation>
    </subcellularLocation>
</comment>
<comment type="similarity">
    <text evidence="1">Belongs to the TRAFAC class translation factor GTPase superfamily. Classic translation factor GTPase family. LepA subfamily.</text>
</comment>
<name>LEPA_CORGL</name>
<organism>
    <name type="scientific">Corynebacterium glutamicum (strain ATCC 13032 / DSM 20300 / JCM 1318 / BCRC 11384 / CCUG 27702 / LMG 3730 / NBRC 12168 / NCIMB 10025 / NRRL B-2784 / 534)</name>
    <dbReference type="NCBI Taxonomy" id="196627"/>
    <lineage>
        <taxon>Bacteria</taxon>
        <taxon>Bacillati</taxon>
        <taxon>Actinomycetota</taxon>
        <taxon>Actinomycetes</taxon>
        <taxon>Mycobacteriales</taxon>
        <taxon>Corynebacteriaceae</taxon>
        <taxon>Corynebacterium</taxon>
    </lineage>
</organism>
<evidence type="ECO:0000255" key="1">
    <source>
        <dbReference type="HAMAP-Rule" id="MF_00071"/>
    </source>
</evidence>
<proteinExistence type="inferred from homology"/>
<gene>
    <name evidence="1" type="primary">lepA</name>
    <name type="ordered locus">Cgl2341</name>
    <name type="ordered locus">cg2571</name>
</gene>
<sequence>MAEKFAETTFTDPARIRNFCIIAHIDHGKSTLADRILQLSNVVDARDMRDQYLDNMDIERERGITIKAQNVRLPWIPRSGEYEGQQIVMQMIDTPGHVDFTYEVSRALEACEGAILLVDAAQGIEAQTLANLYLAMENDLEIIPVLNKIDLPAADPDKYALEIANIVGCEPEDVLRVSGKTGMGVPELLDKVVELIPAPTSEFEEDAPARAMIFDSVYDTYRGVVTYIRMMDGKLTPRQKIKMMSTGATHELLEIGIVSPTPKKCVGLGPGEVGYLITGVKDVRQSKVGDTVTWAIHGAEQPLRGYQEPTPMVYSGLFPISQADFPDLRDALEKLQLNDASLTYEPETSVALGFGFRCGFLGLLHMEITRDRLEREFGLDLISTAPSVNYRVIDEAGKEFRVHNPSDWPGGKLSEVYEPIVKVTIIVPSEFVGPTMELCQTKRGQMGGMDYLSEDRVELRYTMPLGEIIFDFFDMLKSRTKGYASLNYEEAGEQTADLVKVDILLQGEPVDAFSAIVHRDNAQWYGNKMTVKLKELIPRQQFEVPVQAAIGSKVIARENIRALRKDVLAKCYGGDISRKRKLLEKQKAGKKRMKNIGSVEVPQEAFVAALSTDEA</sequence>
<reference key="1">
    <citation type="journal article" date="2003" name="Appl. Microbiol. Biotechnol.">
        <title>The Corynebacterium glutamicum genome: features and impacts on biotechnological processes.</title>
        <authorList>
            <person name="Ikeda M."/>
            <person name="Nakagawa S."/>
        </authorList>
    </citation>
    <scope>NUCLEOTIDE SEQUENCE [LARGE SCALE GENOMIC DNA]</scope>
    <source>
        <strain>ATCC 13032 / DSM 20300 / JCM 1318 / BCRC 11384 / CCUG 27702 / LMG 3730 / NBRC 12168 / NCIMB 10025 / NRRL B-2784 / 534</strain>
    </source>
</reference>
<reference key="2">
    <citation type="journal article" date="2003" name="J. Biotechnol.">
        <title>The complete Corynebacterium glutamicum ATCC 13032 genome sequence and its impact on the production of L-aspartate-derived amino acids and vitamins.</title>
        <authorList>
            <person name="Kalinowski J."/>
            <person name="Bathe B."/>
            <person name="Bartels D."/>
            <person name="Bischoff N."/>
            <person name="Bott M."/>
            <person name="Burkovski A."/>
            <person name="Dusch N."/>
            <person name="Eggeling L."/>
            <person name="Eikmanns B.J."/>
            <person name="Gaigalat L."/>
            <person name="Goesmann A."/>
            <person name="Hartmann M."/>
            <person name="Huthmacher K."/>
            <person name="Kraemer R."/>
            <person name="Linke B."/>
            <person name="McHardy A.C."/>
            <person name="Meyer F."/>
            <person name="Moeckel B."/>
            <person name="Pfefferle W."/>
            <person name="Puehler A."/>
            <person name="Rey D.A."/>
            <person name="Rueckert C."/>
            <person name="Rupp O."/>
            <person name="Sahm H."/>
            <person name="Wendisch V.F."/>
            <person name="Wiegraebe I."/>
            <person name="Tauch A."/>
        </authorList>
    </citation>
    <scope>NUCLEOTIDE SEQUENCE [LARGE SCALE GENOMIC DNA]</scope>
    <source>
        <strain>ATCC 13032 / DSM 20300 / JCM 1318 / BCRC 11384 / CCUG 27702 / LMG 3730 / NBRC 12168 / NCIMB 10025 / NRRL B-2784 / 534</strain>
    </source>
</reference>
<keyword id="KW-1003">Cell membrane</keyword>
<keyword id="KW-0342">GTP-binding</keyword>
<keyword id="KW-0378">Hydrolase</keyword>
<keyword id="KW-0472">Membrane</keyword>
<keyword id="KW-0547">Nucleotide-binding</keyword>
<keyword id="KW-0648">Protein biosynthesis</keyword>
<keyword id="KW-1185">Reference proteome</keyword>
<feature type="chain" id="PRO_0000176266" description="Elongation factor 4">
    <location>
        <begin position="1"/>
        <end position="615"/>
    </location>
</feature>
<feature type="domain" description="tr-type G">
    <location>
        <begin position="14"/>
        <end position="200"/>
    </location>
</feature>
<feature type="binding site" evidence="1">
    <location>
        <begin position="26"/>
        <end position="31"/>
    </location>
    <ligand>
        <name>GTP</name>
        <dbReference type="ChEBI" id="CHEBI:37565"/>
    </ligand>
</feature>
<feature type="binding site" evidence="1">
    <location>
        <begin position="147"/>
        <end position="150"/>
    </location>
    <ligand>
        <name>GTP</name>
        <dbReference type="ChEBI" id="CHEBI:37565"/>
    </ligand>
</feature>
<protein>
    <recommendedName>
        <fullName evidence="1">Elongation factor 4</fullName>
        <shortName evidence="1">EF-4</shortName>
        <ecNumber evidence="1">3.6.5.n1</ecNumber>
    </recommendedName>
    <alternativeName>
        <fullName evidence="1">Ribosomal back-translocase LepA</fullName>
    </alternativeName>
</protein>
<dbReference type="EC" id="3.6.5.n1" evidence="1"/>
<dbReference type="EMBL" id="BA000036">
    <property type="protein sequence ID" value="BAB99734.1"/>
    <property type="molecule type" value="Genomic_DNA"/>
</dbReference>
<dbReference type="EMBL" id="BX927155">
    <property type="protein sequence ID" value="CAF21006.1"/>
    <property type="molecule type" value="Genomic_DNA"/>
</dbReference>
<dbReference type="RefSeq" id="NP_601542.1">
    <property type="nucleotide sequence ID" value="NC_003450.3"/>
</dbReference>
<dbReference type="RefSeq" id="WP_011015054.1">
    <property type="nucleotide sequence ID" value="NC_006958.1"/>
</dbReference>
<dbReference type="SMR" id="Q8NN68"/>
<dbReference type="STRING" id="196627.cg2571"/>
<dbReference type="GeneID" id="1020292"/>
<dbReference type="KEGG" id="cgb:cg2571"/>
<dbReference type="KEGG" id="cgl:Cgl2341"/>
<dbReference type="PATRIC" id="fig|196627.13.peg.2276"/>
<dbReference type="eggNOG" id="COG0481">
    <property type="taxonomic scope" value="Bacteria"/>
</dbReference>
<dbReference type="HOGENOM" id="CLU_009995_3_3_11"/>
<dbReference type="OrthoDB" id="9801472at2"/>
<dbReference type="BioCyc" id="CORYNE:G18NG-11938-MONOMER"/>
<dbReference type="Proteomes" id="UP000000582">
    <property type="component" value="Chromosome"/>
</dbReference>
<dbReference type="Proteomes" id="UP000001009">
    <property type="component" value="Chromosome"/>
</dbReference>
<dbReference type="GO" id="GO:0005886">
    <property type="term" value="C:plasma membrane"/>
    <property type="evidence" value="ECO:0007669"/>
    <property type="project" value="UniProtKB-SubCell"/>
</dbReference>
<dbReference type="GO" id="GO:0005525">
    <property type="term" value="F:GTP binding"/>
    <property type="evidence" value="ECO:0007669"/>
    <property type="project" value="UniProtKB-UniRule"/>
</dbReference>
<dbReference type="GO" id="GO:0003924">
    <property type="term" value="F:GTPase activity"/>
    <property type="evidence" value="ECO:0007669"/>
    <property type="project" value="UniProtKB-UniRule"/>
</dbReference>
<dbReference type="GO" id="GO:0043022">
    <property type="term" value="F:ribosome binding"/>
    <property type="evidence" value="ECO:0007669"/>
    <property type="project" value="UniProtKB-UniRule"/>
</dbReference>
<dbReference type="GO" id="GO:0003746">
    <property type="term" value="F:translation elongation factor activity"/>
    <property type="evidence" value="ECO:0007669"/>
    <property type="project" value="UniProtKB-UniRule"/>
</dbReference>
<dbReference type="GO" id="GO:0045727">
    <property type="term" value="P:positive regulation of translation"/>
    <property type="evidence" value="ECO:0007669"/>
    <property type="project" value="UniProtKB-UniRule"/>
</dbReference>
<dbReference type="CDD" id="cd03699">
    <property type="entry name" value="EF4_II"/>
    <property type="match status" value="1"/>
</dbReference>
<dbReference type="CDD" id="cd16260">
    <property type="entry name" value="EF4_III"/>
    <property type="match status" value="1"/>
</dbReference>
<dbReference type="CDD" id="cd01890">
    <property type="entry name" value="LepA"/>
    <property type="match status" value="1"/>
</dbReference>
<dbReference type="CDD" id="cd03709">
    <property type="entry name" value="lepA_C"/>
    <property type="match status" value="1"/>
</dbReference>
<dbReference type="FunFam" id="3.40.50.300:FF:000078">
    <property type="entry name" value="Elongation factor 4"/>
    <property type="match status" value="1"/>
</dbReference>
<dbReference type="FunFam" id="2.40.30.10:FF:000015">
    <property type="entry name" value="Translation factor GUF1, mitochondrial"/>
    <property type="match status" value="1"/>
</dbReference>
<dbReference type="FunFam" id="3.30.70.240:FF:000007">
    <property type="entry name" value="Translation factor GUF1, mitochondrial"/>
    <property type="match status" value="1"/>
</dbReference>
<dbReference type="FunFam" id="3.30.70.2570:FF:000001">
    <property type="entry name" value="Translation factor GUF1, mitochondrial"/>
    <property type="match status" value="1"/>
</dbReference>
<dbReference type="FunFam" id="3.30.70.870:FF:000004">
    <property type="entry name" value="Translation factor GUF1, mitochondrial"/>
    <property type="match status" value="1"/>
</dbReference>
<dbReference type="Gene3D" id="3.30.70.240">
    <property type="match status" value="1"/>
</dbReference>
<dbReference type="Gene3D" id="3.30.70.2570">
    <property type="entry name" value="Elongation factor 4, C-terminal domain"/>
    <property type="match status" value="1"/>
</dbReference>
<dbReference type="Gene3D" id="3.30.70.870">
    <property type="entry name" value="Elongation Factor G (Translational Gtpase), domain 3"/>
    <property type="match status" value="1"/>
</dbReference>
<dbReference type="Gene3D" id="3.40.50.300">
    <property type="entry name" value="P-loop containing nucleotide triphosphate hydrolases"/>
    <property type="match status" value="1"/>
</dbReference>
<dbReference type="Gene3D" id="2.40.30.10">
    <property type="entry name" value="Translation factors"/>
    <property type="match status" value="1"/>
</dbReference>
<dbReference type="HAMAP" id="MF_00071">
    <property type="entry name" value="LepA"/>
    <property type="match status" value="1"/>
</dbReference>
<dbReference type="InterPro" id="IPR006297">
    <property type="entry name" value="EF-4"/>
</dbReference>
<dbReference type="InterPro" id="IPR035647">
    <property type="entry name" value="EFG_III/V"/>
</dbReference>
<dbReference type="InterPro" id="IPR000640">
    <property type="entry name" value="EFG_V-like"/>
</dbReference>
<dbReference type="InterPro" id="IPR004161">
    <property type="entry name" value="EFTu-like_2"/>
</dbReference>
<dbReference type="InterPro" id="IPR031157">
    <property type="entry name" value="G_TR_CS"/>
</dbReference>
<dbReference type="InterPro" id="IPR038363">
    <property type="entry name" value="LepA_C_sf"/>
</dbReference>
<dbReference type="InterPro" id="IPR013842">
    <property type="entry name" value="LepA_CTD"/>
</dbReference>
<dbReference type="InterPro" id="IPR035654">
    <property type="entry name" value="LepA_IV"/>
</dbReference>
<dbReference type="InterPro" id="IPR027417">
    <property type="entry name" value="P-loop_NTPase"/>
</dbReference>
<dbReference type="InterPro" id="IPR005225">
    <property type="entry name" value="Small_GTP-bd"/>
</dbReference>
<dbReference type="InterPro" id="IPR000795">
    <property type="entry name" value="T_Tr_GTP-bd_dom"/>
</dbReference>
<dbReference type="InterPro" id="IPR009000">
    <property type="entry name" value="Transl_B-barrel_sf"/>
</dbReference>
<dbReference type="NCBIfam" id="TIGR01393">
    <property type="entry name" value="lepA"/>
    <property type="match status" value="1"/>
</dbReference>
<dbReference type="NCBIfam" id="TIGR00231">
    <property type="entry name" value="small_GTP"/>
    <property type="match status" value="1"/>
</dbReference>
<dbReference type="PANTHER" id="PTHR43512:SF4">
    <property type="entry name" value="TRANSLATION FACTOR GUF1 HOMOLOG, CHLOROPLASTIC"/>
    <property type="match status" value="1"/>
</dbReference>
<dbReference type="PANTHER" id="PTHR43512">
    <property type="entry name" value="TRANSLATION FACTOR GUF1-RELATED"/>
    <property type="match status" value="1"/>
</dbReference>
<dbReference type="Pfam" id="PF00679">
    <property type="entry name" value="EFG_C"/>
    <property type="match status" value="1"/>
</dbReference>
<dbReference type="Pfam" id="PF00009">
    <property type="entry name" value="GTP_EFTU"/>
    <property type="match status" value="1"/>
</dbReference>
<dbReference type="Pfam" id="PF03144">
    <property type="entry name" value="GTP_EFTU_D2"/>
    <property type="match status" value="1"/>
</dbReference>
<dbReference type="Pfam" id="PF06421">
    <property type="entry name" value="LepA_C"/>
    <property type="match status" value="1"/>
</dbReference>
<dbReference type="PRINTS" id="PR00315">
    <property type="entry name" value="ELONGATNFCT"/>
</dbReference>
<dbReference type="SMART" id="SM00838">
    <property type="entry name" value="EFG_C"/>
    <property type="match status" value="1"/>
</dbReference>
<dbReference type="SUPFAM" id="SSF54980">
    <property type="entry name" value="EF-G C-terminal domain-like"/>
    <property type="match status" value="2"/>
</dbReference>
<dbReference type="SUPFAM" id="SSF52540">
    <property type="entry name" value="P-loop containing nucleoside triphosphate hydrolases"/>
    <property type="match status" value="1"/>
</dbReference>
<dbReference type="SUPFAM" id="SSF50447">
    <property type="entry name" value="Translation proteins"/>
    <property type="match status" value="1"/>
</dbReference>
<dbReference type="PROSITE" id="PS00301">
    <property type="entry name" value="G_TR_1"/>
    <property type="match status" value="1"/>
</dbReference>
<dbReference type="PROSITE" id="PS51722">
    <property type="entry name" value="G_TR_2"/>
    <property type="match status" value="1"/>
</dbReference>
<accession>Q8NN68</accession>